<proteinExistence type="inferred from homology"/>
<evidence type="ECO:0000305" key="1"/>
<comment type="similarity">
    <text evidence="1">Belongs to the PPR family. PCMP-E subfamily.</text>
</comment>
<comment type="online information" name="Pentatricopeptide repeat proteins">
    <link uri="https://ppr.plantenergy.uwa.edu.au"/>
</comment>
<organism>
    <name type="scientific">Arabidopsis thaliana</name>
    <name type="common">Mouse-ear cress</name>
    <dbReference type="NCBI Taxonomy" id="3702"/>
    <lineage>
        <taxon>Eukaryota</taxon>
        <taxon>Viridiplantae</taxon>
        <taxon>Streptophyta</taxon>
        <taxon>Embryophyta</taxon>
        <taxon>Tracheophyta</taxon>
        <taxon>Spermatophyta</taxon>
        <taxon>Magnoliopsida</taxon>
        <taxon>eudicotyledons</taxon>
        <taxon>Gunneridae</taxon>
        <taxon>Pentapetalae</taxon>
        <taxon>rosids</taxon>
        <taxon>malvids</taxon>
        <taxon>Brassicales</taxon>
        <taxon>Brassicaceae</taxon>
        <taxon>Camelineae</taxon>
        <taxon>Arabidopsis</taxon>
    </lineage>
</organism>
<sequence>MIWSSDSCFKSRKHQCLIFLKLCSSIKHLLQIHGQIHLSSLQNDSFIISELVRVSSLSLAKDLAFARTLLLHSSDSTPSTWNMLSRGYSSSDSPVESIWVYSEMKRRGIKPNKLTFPFLLKACASFLGLTAGRQIQVEVLKHGFDFDVYVGNNLIHLYGTCKKTSDARKVFDEMTERNVVSWNSIMTALVENGKLNLVFECFCEMIGKRFCPDETTMVVLLSACGGNLSLGKLVHSQVMVRELELNCRLGTALVDMYAKSGGLEYARLVFERMVDKNVWTWSAMIVGLAQYGFAEEALQLFSKMMKESSVRPNYVTFLGVLCACSHTGLVDDGYKYFHEMEKIHKIKPMMIHYGAMVDILGRAGRLNEAYDFIKKMPFEPDAVVWRTLLSACSIHHDEDDEGIGEKVKKRLIELEPKRSGNLVIVANRFAEARMWAEAAEVRRVMKETKMKKIAGESCLELGGSFHRFFSGYDPRSEYVSIYELLDLFKFQLTCDYRLVSE</sequence>
<protein>
    <recommendedName>
        <fullName>Pentatricopeptide repeat-containing protein At2g36730</fullName>
    </recommendedName>
</protein>
<feature type="chain" id="PRO_0000356047" description="Pentatricopeptide repeat-containing protein At2g36730">
    <location>
        <begin position="1"/>
        <end position="501"/>
    </location>
</feature>
<feature type="repeat" description="PPR 1">
    <location>
        <begin position="77"/>
        <end position="111"/>
    </location>
</feature>
<feature type="repeat" description="PPR 2">
    <location>
        <begin position="112"/>
        <end position="146"/>
    </location>
</feature>
<feature type="repeat" description="PPR 3">
    <location>
        <begin position="147"/>
        <end position="177"/>
    </location>
</feature>
<feature type="repeat" description="PPR 4">
    <location>
        <begin position="178"/>
        <end position="212"/>
    </location>
</feature>
<feature type="repeat" description="PPR 5">
    <location>
        <begin position="213"/>
        <end position="243"/>
    </location>
</feature>
<feature type="repeat" description="PPR 6">
    <location>
        <begin position="246"/>
        <end position="276"/>
    </location>
</feature>
<feature type="repeat" description="PPR 7">
    <location>
        <begin position="277"/>
        <end position="312"/>
    </location>
</feature>
<feature type="repeat" description="PPR 8">
    <location>
        <begin position="313"/>
        <end position="343"/>
    </location>
</feature>
<feature type="repeat" description="PPR 9">
    <location>
        <begin position="349"/>
        <end position="379"/>
    </location>
</feature>
<feature type="region of interest" description="Type E motif">
    <location>
        <begin position="384"/>
        <end position="462"/>
    </location>
</feature>
<feature type="region of interest" description="Type E(+) motif">
    <location>
        <begin position="463"/>
        <end position="493"/>
    </location>
</feature>
<name>PP188_ARATH</name>
<reference key="1">
    <citation type="journal article" date="1999" name="Nature">
        <title>Sequence and analysis of chromosome 2 of the plant Arabidopsis thaliana.</title>
        <authorList>
            <person name="Lin X."/>
            <person name="Kaul S."/>
            <person name="Rounsley S.D."/>
            <person name="Shea T.P."/>
            <person name="Benito M.-I."/>
            <person name="Town C.D."/>
            <person name="Fujii C.Y."/>
            <person name="Mason T.M."/>
            <person name="Bowman C.L."/>
            <person name="Barnstead M.E."/>
            <person name="Feldblyum T.V."/>
            <person name="Buell C.R."/>
            <person name="Ketchum K.A."/>
            <person name="Lee J.J."/>
            <person name="Ronning C.M."/>
            <person name="Koo H.L."/>
            <person name="Moffat K.S."/>
            <person name="Cronin L.A."/>
            <person name="Shen M."/>
            <person name="Pai G."/>
            <person name="Van Aken S."/>
            <person name="Umayam L."/>
            <person name="Tallon L.J."/>
            <person name="Gill J.E."/>
            <person name="Adams M.D."/>
            <person name="Carrera A.J."/>
            <person name="Creasy T.H."/>
            <person name="Goodman H.M."/>
            <person name="Somerville C.R."/>
            <person name="Copenhaver G.P."/>
            <person name="Preuss D."/>
            <person name="Nierman W.C."/>
            <person name="White O."/>
            <person name="Eisen J.A."/>
            <person name="Salzberg S.L."/>
            <person name="Fraser C.M."/>
            <person name="Venter J.C."/>
        </authorList>
    </citation>
    <scope>NUCLEOTIDE SEQUENCE [LARGE SCALE GENOMIC DNA]</scope>
    <source>
        <strain>cv. Columbia</strain>
    </source>
</reference>
<reference key="2">
    <citation type="journal article" date="2017" name="Plant J.">
        <title>Araport11: a complete reannotation of the Arabidopsis thaliana reference genome.</title>
        <authorList>
            <person name="Cheng C.Y."/>
            <person name="Krishnakumar V."/>
            <person name="Chan A.P."/>
            <person name="Thibaud-Nissen F."/>
            <person name="Schobel S."/>
            <person name="Town C.D."/>
        </authorList>
    </citation>
    <scope>GENOME REANNOTATION</scope>
    <source>
        <strain>cv. Columbia</strain>
    </source>
</reference>
<reference key="3">
    <citation type="journal article" date="2000" name="Plant Mol. Biol.">
        <title>In Arabidopsis thaliana, 1% of the genome codes for a novel protein family unique to plants.</title>
        <authorList>
            <person name="Aubourg S."/>
            <person name="Boudet N."/>
            <person name="Kreis M."/>
            <person name="Lecharny A."/>
        </authorList>
    </citation>
    <scope>GENE FAMILY</scope>
</reference>
<reference key="4">
    <citation type="journal article" date="2004" name="Plant Cell">
        <title>Genome-wide analysis of Arabidopsis pentatricopeptide repeat proteins reveals their essential role in organelle biogenesis.</title>
        <authorList>
            <person name="Lurin C."/>
            <person name="Andres C."/>
            <person name="Aubourg S."/>
            <person name="Bellaoui M."/>
            <person name="Bitton F."/>
            <person name="Bruyere C."/>
            <person name="Caboche M."/>
            <person name="Debast C."/>
            <person name="Gualberto J."/>
            <person name="Hoffmann B."/>
            <person name="Lecharny A."/>
            <person name="Le Ret M."/>
            <person name="Martin-Magniette M.-L."/>
            <person name="Mireau H."/>
            <person name="Peeters N."/>
            <person name="Renou J.-P."/>
            <person name="Szurek B."/>
            <person name="Taconnat L."/>
            <person name="Small I."/>
        </authorList>
    </citation>
    <scope>GENE FAMILY</scope>
</reference>
<accession>Q9ZQA1</accession>
<keyword id="KW-1185">Reference proteome</keyword>
<keyword id="KW-0677">Repeat</keyword>
<gene>
    <name type="primary">PCMP-E44</name>
    <name type="ordered locus">At2g36730</name>
    <name type="ORF">F13K3.13</name>
</gene>
<dbReference type="EMBL" id="AC006282">
    <property type="protein sequence ID" value="AAD20149.1"/>
    <property type="molecule type" value="Genomic_DNA"/>
</dbReference>
<dbReference type="EMBL" id="CP002685">
    <property type="protein sequence ID" value="AEC09292.1"/>
    <property type="molecule type" value="Genomic_DNA"/>
</dbReference>
<dbReference type="PIR" id="A84784">
    <property type="entry name" value="A84784"/>
</dbReference>
<dbReference type="RefSeq" id="NP_181211.1">
    <property type="nucleotide sequence ID" value="NM_129228.2"/>
</dbReference>
<dbReference type="SMR" id="Q9ZQA1"/>
<dbReference type="FunCoup" id="Q9ZQA1">
    <property type="interactions" value="1221"/>
</dbReference>
<dbReference type="STRING" id="3702.Q9ZQA1"/>
<dbReference type="GlyGen" id="Q9ZQA1">
    <property type="glycosylation" value="1 site"/>
</dbReference>
<dbReference type="PaxDb" id="3702-AT2G36730.1"/>
<dbReference type="ProteomicsDB" id="250504"/>
<dbReference type="EnsemblPlants" id="AT2G36730.1">
    <property type="protein sequence ID" value="AT2G36730.1"/>
    <property type="gene ID" value="AT2G36730"/>
</dbReference>
<dbReference type="GeneID" id="818245"/>
<dbReference type="Gramene" id="AT2G36730.1">
    <property type="protein sequence ID" value="AT2G36730.1"/>
    <property type="gene ID" value="AT2G36730"/>
</dbReference>
<dbReference type="KEGG" id="ath:AT2G36730"/>
<dbReference type="Araport" id="AT2G36730"/>
<dbReference type="TAIR" id="AT2G36730"/>
<dbReference type="eggNOG" id="KOG4197">
    <property type="taxonomic scope" value="Eukaryota"/>
</dbReference>
<dbReference type="HOGENOM" id="CLU_002706_0_6_1"/>
<dbReference type="InParanoid" id="Q9ZQA1"/>
<dbReference type="OMA" id="IGSWDEA"/>
<dbReference type="OrthoDB" id="1928982at2759"/>
<dbReference type="PhylomeDB" id="Q9ZQA1"/>
<dbReference type="PRO" id="PR:Q9ZQA1"/>
<dbReference type="Proteomes" id="UP000006548">
    <property type="component" value="Chromosome 2"/>
</dbReference>
<dbReference type="ExpressionAtlas" id="Q9ZQA1">
    <property type="expression patterns" value="baseline and differential"/>
</dbReference>
<dbReference type="GO" id="GO:0003723">
    <property type="term" value="F:RNA binding"/>
    <property type="evidence" value="ECO:0007669"/>
    <property type="project" value="InterPro"/>
</dbReference>
<dbReference type="GO" id="GO:0009451">
    <property type="term" value="P:RNA modification"/>
    <property type="evidence" value="ECO:0007669"/>
    <property type="project" value="InterPro"/>
</dbReference>
<dbReference type="FunFam" id="1.25.40.10:FF:000396">
    <property type="entry name" value="Pentatricopeptide repeat-containing protein At2g36730"/>
    <property type="match status" value="1"/>
</dbReference>
<dbReference type="FunFam" id="1.25.40.10:FF:001678">
    <property type="entry name" value="Pentatricopeptide repeat-containing protein At2g36730"/>
    <property type="match status" value="1"/>
</dbReference>
<dbReference type="FunFam" id="1.25.40.10:FF:001773">
    <property type="entry name" value="Pentatricopeptide repeat-containing protein At2g36730"/>
    <property type="match status" value="1"/>
</dbReference>
<dbReference type="Gene3D" id="1.25.40.10">
    <property type="entry name" value="Tetratricopeptide repeat domain"/>
    <property type="match status" value="4"/>
</dbReference>
<dbReference type="InterPro" id="IPR046848">
    <property type="entry name" value="E_motif"/>
</dbReference>
<dbReference type="InterPro" id="IPR002885">
    <property type="entry name" value="Pentatricopeptide_rpt"/>
</dbReference>
<dbReference type="InterPro" id="IPR046960">
    <property type="entry name" value="PPR_At4g14850-like_plant"/>
</dbReference>
<dbReference type="InterPro" id="IPR011990">
    <property type="entry name" value="TPR-like_helical_dom_sf"/>
</dbReference>
<dbReference type="NCBIfam" id="TIGR00756">
    <property type="entry name" value="PPR"/>
    <property type="match status" value="2"/>
</dbReference>
<dbReference type="PANTHER" id="PTHR47926">
    <property type="entry name" value="PENTATRICOPEPTIDE REPEAT-CONTAINING PROTEIN"/>
    <property type="match status" value="1"/>
</dbReference>
<dbReference type="PANTHER" id="PTHR47926:SF347">
    <property type="entry name" value="PENTATRICOPEPTIDE REPEAT-CONTAINING PROTEIN"/>
    <property type="match status" value="1"/>
</dbReference>
<dbReference type="Pfam" id="PF20431">
    <property type="entry name" value="E_motif"/>
    <property type="match status" value="1"/>
</dbReference>
<dbReference type="Pfam" id="PF01535">
    <property type="entry name" value="PPR"/>
    <property type="match status" value="4"/>
</dbReference>
<dbReference type="Pfam" id="PF13041">
    <property type="entry name" value="PPR_2"/>
    <property type="match status" value="2"/>
</dbReference>
<dbReference type="PROSITE" id="PS51375">
    <property type="entry name" value="PPR"/>
    <property type="match status" value="8"/>
</dbReference>